<gene>
    <name evidence="2" type="ORF">T16H12.3</name>
</gene>
<dbReference type="EMBL" id="BX284603">
    <property type="protein sequence ID" value="CAA83136.3"/>
    <property type="molecule type" value="Genomic_DNA"/>
</dbReference>
<dbReference type="EMBL" id="BX284603">
    <property type="protein sequence ID" value="CAE52907.3"/>
    <property type="molecule type" value="Genomic_DNA"/>
</dbReference>
<dbReference type="EMBL" id="BX284603">
    <property type="protein sequence ID" value="CTQ86585.1"/>
    <property type="molecule type" value="Genomic_DNA"/>
</dbReference>
<dbReference type="PIR" id="S42382">
    <property type="entry name" value="S42382"/>
</dbReference>
<dbReference type="RefSeq" id="NP_001022762.2">
    <molecule id="P34566-1"/>
    <property type="nucleotide sequence ID" value="NM_001027591.5"/>
</dbReference>
<dbReference type="RefSeq" id="NP_001022763.2">
    <property type="nucleotide sequence ID" value="NM_001027592.4"/>
</dbReference>
<dbReference type="RefSeq" id="NP_001299885.1">
    <property type="nucleotide sequence ID" value="NM_001312956.1"/>
</dbReference>
<dbReference type="RefSeq" id="NP_001367081.1">
    <molecule id="P34566-2"/>
    <property type="nucleotide sequence ID" value="NM_001379880.2"/>
</dbReference>
<dbReference type="RefSeq" id="NP_001370945.1">
    <molecule id="P34566-3"/>
    <property type="nucleotide sequence ID" value="NM_001382974.2"/>
</dbReference>
<dbReference type="FunCoup" id="P34566">
    <property type="interactions" value="1392"/>
</dbReference>
<dbReference type="PaxDb" id="6239-T16H12.3b"/>
<dbReference type="PeptideAtlas" id="P34566"/>
<dbReference type="EnsemblMetazoa" id="T16H12.3a.1">
    <molecule id="P34566-1"/>
    <property type="protein sequence ID" value="T16H12.3a.1"/>
    <property type="gene ID" value="WBGene00011813"/>
</dbReference>
<dbReference type="EnsemblMetazoa" id="T16H12.3b.1">
    <molecule id="P34566-2"/>
    <property type="protein sequence ID" value="T16H12.3b.1"/>
    <property type="gene ID" value="WBGene00011813"/>
</dbReference>
<dbReference type="EnsemblMetazoa" id="T16H12.3c.1">
    <molecule id="P34566-3"/>
    <property type="protein sequence ID" value="T16H12.3c.1"/>
    <property type="gene ID" value="WBGene00011813"/>
</dbReference>
<dbReference type="GeneID" id="188560"/>
<dbReference type="KEGG" id="cel:CELE_T16H12.3"/>
<dbReference type="UCSC" id="T16H12.3a">
    <molecule id="P34566-1"/>
    <property type="organism name" value="c. elegans"/>
</dbReference>
<dbReference type="AGR" id="WB:WBGene00011813"/>
<dbReference type="CTD" id="188560"/>
<dbReference type="WormBase" id="T16H12.3a">
    <molecule id="P34566-1"/>
    <property type="protein sequence ID" value="CE50317"/>
    <property type="gene ID" value="WBGene00011813"/>
</dbReference>
<dbReference type="WormBase" id="T16H12.3b">
    <molecule id="P34566-2"/>
    <property type="protein sequence ID" value="CE54154"/>
    <property type="gene ID" value="WBGene00011813"/>
</dbReference>
<dbReference type="WormBase" id="T16H12.3c">
    <molecule id="P34566-3"/>
    <property type="protein sequence ID" value="CE50218"/>
    <property type="gene ID" value="WBGene00011813"/>
</dbReference>
<dbReference type="eggNOG" id="ENOG502THXJ">
    <property type="taxonomic scope" value="Eukaryota"/>
</dbReference>
<dbReference type="HOGENOM" id="CLU_059631_0_0_1"/>
<dbReference type="InParanoid" id="P34566"/>
<dbReference type="OMA" id="TIRHHCY"/>
<dbReference type="OrthoDB" id="5800509at2759"/>
<dbReference type="PRO" id="PR:P34566"/>
<dbReference type="Proteomes" id="UP000001940">
    <property type="component" value="Chromosome III"/>
</dbReference>
<dbReference type="Bgee" id="WBGene00011813">
    <property type="expression patterns" value="Expressed in germ line (C elegans) and 4 other cell types or tissues"/>
</dbReference>
<dbReference type="ExpressionAtlas" id="P34566">
    <property type="expression patterns" value="baseline and differential"/>
</dbReference>
<protein>
    <recommendedName>
        <fullName>Uncharacterized protein T16H12.3</fullName>
    </recommendedName>
</protein>
<accession>P34566</accession>
<accession>A0A0K3ARA8</accession>
<accession>Q7JMR5</accession>
<evidence type="ECO:0000305" key="1"/>
<evidence type="ECO:0000312" key="2">
    <source>
        <dbReference type="WormBase" id="T16H12.3a"/>
    </source>
</evidence>
<evidence type="ECO:0000312" key="3">
    <source>
        <dbReference type="WormBase" id="T16H12.3b"/>
    </source>
</evidence>
<evidence type="ECO:0000312" key="4">
    <source>
        <dbReference type="WormBase" id="T16H12.3c"/>
    </source>
</evidence>
<keyword id="KW-0025">Alternative splicing</keyword>
<keyword id="KW-1185">Reference proteome</keyword>
<reference key="1">
    <citation type="journal article" date="1998" name="Science">
        <title>Genome sequence of the nematode C. elegans: a platform for investigating biology.</title>
        <authorList>
            <consortium name="The C. elegans sequencing consortium"/>
        </authorList>
    </citation>
    <scope>NUCLEOTIDE SEQUENCE [LARGE SCALE GENOMIC DNA]</scope>
    <source>
        <strain>Bristol N2</strain>
    </source>
</reference>
<feature type="chain" id="PRO_0000065466" description="Uncharacterized protein T16H12.3">
    <location>
        <begin position="1"/>
        <end position="385"/>
    </location>
</feature>
<feature type="splice variant" id="VSP_060965" description="In isoform b." evidence="1">
    <original>EIIEPVNFSAVKKSKTRQTSESNAKGGKE</original>
    <variation>CQEIQNSANIGKQCQRWKRIERFPGKIYA</variation>
    <location>
        <begin position="298"/>
        <end position="326"/>
    </location>
</feature>
<feature type="splice variant" id="VSP_060966" description="In isoform c." evidence="1">
    <location>
        <begin position="303"/>
        <end position="306"/>
    </location>
</feature>
<feature type="splice variant" id="VSP_060967" description="In isoform b." evidence="1">
    <location>
        <begin position="327"/>
        <end position="385"/>
    </location>
</feature>
<sequence>MSDTTYFTDAWQPKEVLDPETETNANESIIQMVFYHKLACIYHIIMSNYTWKQADIQTLISFYETLGEEINPKVQKVQQNSEANSFSEKAKKFGLLDLPIYSKCVDSSQLIAESASRVYHDAKEYMNNGSATEAELYRFVSSILKEVLEPIFNPKEIRNVLKGLITSLVDSRSRDEEIGSDIEKNVKYEVVRFLPESPPNFPGFNDNVSRSITNFIGYFALHTIRHHCYVNFGVDGELKFYQRNMYKKAFDDLRVNKAKPTVSVKPEASLKREPKAETPTLTRVKPEIRNDSDEDFCEIIEPVNFSAVKKSKTRQTSESNAKGGKELKDFPEKYMLEDLDKDDLPMNFKTKFRKLVEQNQMLRDEINDYKELIQLKIAEKKQRMG</sequence>
<proteinExistence type="predicted"/>
<name>YNV3_CAEEL</name>
<organism>
    <name type="scientific">Caenorhabditis elegans</name>
    <dbReference type="NCBI Taxonomy" id="6239"/>
    <lineage>
        <taxon>Eukaryota</taxon>
        <taxon>Metazoa</taxon>
        <taxon>Ecdysozoa</taxon>
        <taxon>Nematoda</taxon>
        <taxon>Chromadorea</taxon>
        <taxon>Rhabditida</taxon>
        <taxon>Rhabditina</taxon>
        <taxon>Rhabditomorpha</taxon>
        <taxon>Rhabditoidea</taxon>
        <taxon>Rhabditidae</taxon>
        <taxon>Peloderinae</taxon>
        <taxon>Caenorhabditis</taxon>
    </lineage>
</organism>
<comment type="alternative products">
    <event type="alternative splicing"/>
    <isoform>
        <id>P34566-1</id>
        <name evidence="2">a</name>
        <sequence type="displayed"/>
    </isoform>
    <isoform>
        <id>P34566-2</id>
        <name evidence="3">b</name>
        <sequence type="described" ref="VSP_060965 VSP_060967"/>
    </isoform>
    <isoform>
        <id>P34566-3</id>
        <name evidence="4">c</name>
        <sequence type="described" ref="VSP_060966"/>
    </isoform>
</comment>